<organism>
    <name type="scientific">Saccharomyces cerevisiae (strain ATCC 204508 / S288c)</name>
    <name type="common">Baker's yeast</name>
    <dbReference type="NCBI Taxonomy" id="559292"/>
    <lineage>
        <taxon>Eukaryota</taxon>
        <taxon>Fungi</taxon>
        <taxon>Dikarya</taxon>
        <taxon>Ascomycota</taxon>
        <taxon>Saccharomycotina</taxon>
        <taxon>Saccharomycetes</taxon>
        <taxon>Saccharomycetales</taxon>
        <taxon>Saccharomycetaceae</taxon>
        <taxon>Saccharomyces</taxon>
    </lineage>
</organism>
<keyword id="KW-0472">Membrane</keyword>
<keyword id="KW-0496">Mitochondrion</keyword>
<keyword id="KW-1000">Mitochondrion outer membrane</keyword>
<keyword id="KW-1185">Reference proteome</keyword>
<keyword id="KW-0812">Transmembrane</keyword>
<keyword id="KW-1133">Transmembrane helix</keyword>
<protein>
    <recommendedName>
        <fullName>Uncharacterized mitochondrial outer membrane protein YDR381C-A</fullName>
    </recommendedName>
</protein>
<dbReference type="EMBL" id="U28373">
    <property type="status" value="NOT_ANNOTATED_CDS"/>
    <property type="molecule type" value="Genomic_DNA"/>
</dbReference>
<dbReference type="EMBL" id="BK006938">
    <property type="protein sequence ID" value="DAA12225.1"/>
    <property type="molecule type" value="Genomic_DNA"/>
</dbReference>
<dbReference type="SMR" id="Q3E6R5"/>
<dbReference type="BioGRID" id="32442">
    <property type="interactions" value="59"/>
</dbReference>
<dbReference type="FunCoup" id="Q3E6R5">
    <property type="interactions" value="18"/>
</dbReference>
<dbReference type="IntAct" id="Q3E6R5">
    <property type="interactions" value="2"/>
</dbReference>
<dbReference type="MINT" id="Q3E6R5"/>
<dbReference type="STRING" id="4932.YDR381C-A"/>
<dbReference type="iPTMnet" id="Q3E6R5"/>
<dbReference type="PaxDb" id="4932-YDR381C-A"/>
<dbReference type="PeptideAtlas" id="Q3E6R5"/>
<dbReference type="EnsemblFungi" id="YDR381C-A_mRNA">
    <property type="protein sequence ID" value="YDR381C-A"/>
    <property type="gene ID" value="YDR381C-A"/>
</dbReference>
<dbReference type="KEGG" id="sce:YDR381C-A"/>
<dbReference type="AGR" id="SGD:S000007650"/>
<dbReference type="SGD" id="S000007650">
    <property type="gene designation" value="YDR381C-A"/>
</dbReference>
<dbReference type="VEuPathDB" id="FungiDB:YDR381C-A"/>
<dbReference type="eggNOG" id="ENOG502S9CE">
    <property type="taxonomic scope" value="Eukaryota"/>
</dbReference>
<dbReference type="HOGENOM" id="CLU_164897_1_0_1"/>
<dbReference type="InParanoid" id="Q3E6R5"/>
<dbReference type="OMA" id="AQVKPGF"/>
<dbReference type="OrthoDB" id="3999982at2759"/>
<dbReference type="BioCyc" id="YEAST:G3O-30112-MONOMER"/>
<dbReference type="BioGRID-ORCS" id="851989">
    <property type="hits" value="0 hits in 10 CRISPR screens"/>
</dbReference>
<dbReference type="ChiTaRS" id="YDR381C-A">
    <property type="organism name" value="yeast"/>
</dbReference>
<dbReference type="PRO" id="PR:Q3E6R5"/>
<dbReference type="Proteomes" id="UP000002311">
    <property type="component" value="Chromosome IV"/>
</dbReference>
<dbReference type="RNAct" id="Q3E6R5">
    <property type="molecule type" value="protein"/>
</dbReference>
<dbReference type="GO" id="GO:0005743">
    <property type="term" value="C:mitochondrial inner membrane"/>
    <property type="evidence" value="ECO:0000314"/>
    <property type="project" value="SGD"/>
</dbReference>
<dbReference type="GO" id="GO:0005741">
    <property type="term" value="C:mitochondrial outer membrane"/>
    <property type="evidence" value="ECO:0007005"/>
    <property type="project" value="SGD"/>
</dbReference>
<dbReference type="GO" id="GO:0005739">
    <property type="term" value="C:mitochondrion"/>
    <property type="evidence" value="ECO:0007005"/>
    <property type="project" value="SGD"/>
</dbReference>
<dbReference type="GO" id="GO:0033617">
    <property type="term" value="P:mitochondrial cytochrome c oxidase assembly"/>
    <property type="evidence" value="ECO:0000315"/>
    <property type="project" value="SGD"/>
</dbReference>
<dbReference type="GO" id="GO:0097250">
    <property type="term" value="P:mitochondrial respirasome assembly"/>
    <property type="evidence" value="ECO:0000315"/>
    <property type="project" value="SGD"/>
</dbReference>
<dbReference type="GO" id="GO:0034551">
    <property type="term" value="P:mitochondrial respiratory chain complex III assembly"/>
    <property type="evidence" value="ECO:0000315"/>
    <property type="project" value="SGD"/>
</dbReference>
<sequence length="114" mass="12714">MSNPFQNIGKNLLYISAAGIASIYVVKTIVKARRDAKFIPKARGNNGEVNEKNYYDNLAQVKPGFPIPKDGGDNIDCSEDHQLVRKSKYEGSGLSAVTRKRGDKLGFLDRRRNE</sequence>
<gene>
    <name type="ordered locus">YDR381C-A</name>
</gene>
<reference key="1">
    <citation type="journal article" date="1997" name="Nature">
        <title>The nucleotide sequence of Saccharomyces cerevisiae chromosome IV.</title>
        <authorList>
            <person name="Jacq C."/>
            <person name="Alt-Moerbe J."/>
            <person name="Andre B."/>
            <person name="Arnold W."/>
            <person name="Bahr A."/>
            <person name="Ballesta J.P.G."/>
            <person name="Bargues M."/>
            <person name="Baron L."/>
            <person name="Becker A."/>
            <person name="Biteau N."/>
            <person name="Bloecker H."/>
            <person name="Blugeon C."/>
            <person name="Boskovic J."/>
            <person name="Brandt P."/>
            <person name="Brueckner M."/>
            <person name="Buitrago M.J."/>
            <person name="Coster F."/>
            <person name="Delaveau T."/>
            <person name="del Rey F."/>
            <person name="Dujon B."/>
            <person name="Eide L.G."/>
            <person name="Garcia-Cantalejo J.M."/>
            <person name="Goffeau A."/>
            <person name="Gomez-Peris A."/>
            <person name="Granotier C."/>
            <person name="Hanemann V."/>
            <person name="Hankeln T."/>
            <person name="Hoheisel J.D."/>
            <person name="Jaeger W."/>
            <person name="Jimenez A."/>
            <person name="Jonniaux J.-L."/>
            <person name="Kraemer C."/>
            <person name="Kuester H."/>
            <person name="Laamanen P."/>
            <person name="Legros Y."/>
            <person name="Louis E.J."/>
            <person name="Moeller-Rieker S."/>
            <person name="Monnet A."/>
            <person name="Moro M."/>
            <person name="Mueller-Auer S."/>
            <person name="Nussbaumer B."/>
            <person name="Paricio N."/>
            <person name="Paulin L."/>
            <person name="Perea J."/>
            <person name="Perez-Alonso M."/>
            <person name="Perez-Ortin J.E."/>
            <person name="Pohl T.M."/>
            <person name="Prydz H."/>
            <person name="Purnelle B."/>
            <person name="Rasmussen S.W."/>
            <person name="Remacha M.A."/>
            <person name="Revuelta J.L."/>
            <person name="Rieger M."/>
            <person name="Salom D."/>
            <person name="Saluz H.P."/>
            <person name="Saiz J.E."/>
            <person name="Saren A.-M."/>
            <person name="Schaefer M."/>
            <person name="Scharfe M."/>
            <person name="Schmidt E.R."/>
            <person name="Schneider C."/>
            <person name="Scholler P."/>
            <person name="Schwarz S."/>
            <person name="Soler-Mira A."/>
            <person name="Urrestarazu L.A."/>
            <person name="Verhasselt P."/>
            <person name="Vissers S."/>
            <person name="Voet M."/>
            <person name="Volckaert G."/>
            <person name="Wagner G."/>
            <person name="Wambutt R."/>
            <person name="Wedler E."/>
            <person name="Wedler H."/>
            <person name="Woelfl S."/>
            <person name="Harris D.E."/>
            <person name="Bowman S."/>
            <person name="Brown D."/>
            <person name="Churcher C.M."/>
            <person name="Connor R."/>
            <person name="Dedman K."/>
            <person name="Gentles S."/>
            <person name="Hamlin N."/>
            <person name="Hunt S."/>
            <person name="Jones L."/>
            <person name="McDonald S."/>
            <person name="Murphy L.D."/>
            <person name="Niblett D."/>
            <person name="Odell C."/>
            <person name="Oliver K."/>
            <person name="Rajandream M.A."/>
            <person name="Richards C."/>
            <person name="Shore L."/>
            <person name="Walsh S.V."/>
            <person name="Barrell B.G."/>
            <person name="Dietrich F.S."/>
            <person name="Mulligan J.T."/>
            <person name="Allen E."/>
            <person name="Araujo R."/>
            <person name="Aviles E."/>
            <person name="Berno A."/>
            <person name="Carpenter J."/>
            <person name="Chen E."/>
            <person name="Cherry J.M."/>
            <person name="Chung E."/>
            <person name="Duncan M."/>
            <person name="Hunicke-Smith S."/>
            <person name="Hyman R.W."/>
            <person name="Komp C."/>
            <person name="Lashkari D."/>
            <person name="Lew H."/>
            <person name="Lin D."/>
            <person name="Mosedale D."/>
            <person name="Nakahara K."/>
            <person name="Namath A."/>
            <person name="Oefner P."/>
            <person name="Oh C."/>
            <person name="Petel F.X."/>
            <person name="Roberts D."/>
            <person name="Schramm S."/>
            <person name="Schroeder M."/>
            <person name="Shogren T."/>
            <person name="Shroff N."/>
            <person name="Winant A."/>
            <person name="Yelton M.A."/>
            <person name="Botstein D."/>
            <person name="Davis R.W."/>
            <person name="Johnston M."/>
            <person name="Andrews S."/>
            <person name="Brinkman R."/>
            <person name="Cooper J."/>
            <person name="Ding H."/>
            <person name="Du Z."/>
            <person name="Favello A."/>
            <person name="Fulton L."/>
            <person name="Gattung S."/>
            <person name="Greco T."/>
            <person name="Hallsworth K."/>
            <person name="Hawkins J."/>
            <person name="Hillier L.W."/>
            <person name="Jier M."/>
            <person name="Johnson D."/>
            <person name="Johnston L."/>
            <person name="Kirsten J."/>
            <person name="Kucaba T."/>
            <person name="Langston Y."/>
            <person name="Latreille P."/>
            <person name="Le T."/>
            <person name="Mardis E."/>
            <person name="Menezes S."/>
            <person name="Miller N."/>
            <person name="Nhan M."/>
            <person name="Pauley A."/>
            <person name="Peluso D."/>
            <person name="Rifkin L."/>
            <person name="Riles L."/>
            <person name="Taich A."/>
            <person name="Trevaskis E."/>
            <person name="Vignati D."/>
            <person name="Wilcox L."/>
            <person name="Wohldman P."/>
            <person name="Vaudin M."/>
            <person name="Wilson R."/>
            <person name="Waterston R."/>
            <person name="Albermann K."/>
            <person name="Hani J."/>
            <person name="Heumann K."/>
            <person name="Kleine K."/>
            <person name="Mewes H.-W."/>
            <person name="Zollner A."/>
            <person name="Zaccaria P."/>
        </authorList>
    </citation>
    <scope>NUCLEOTIDE SEQUENCE [LARGE SCALE GENOMIC DNA]</scope>
    <source>
        <strain>ATCC 204508 / S288c</strain>
    </source>
</reference>
<reference key="2">
    <citation type="journal article" date="2014" name="G3 (Bethesda)">
        <title>The reference genome sequence of Saccharomyces cerevisiae: Then and now.</title>
        <authorList>
            <person name="Engel S.R."/>
            <person name="Dietrich F.S."/>
            <person name="Fisk D.G."/>
            <person name="Binkley G."/>
            <person name="Balakrishnan R."/>
            <person name="Costanzo M.C."/>
            <person name="Dwight S.S."/>
            <person name="Hitz B.C."/>
            <person name="Karra K."/>
            <person name="Nash R.S."/>
            <person name="Weng S."/>
            <person name="Wong E.D."/>
            <person name="Lloyd P."/>
            <person name="Skrzypek M.S."/>
            <person name="Miyasato S.R."/>
            <person name="Simison M."/>
            <person name="Cherry J.M."/>
        </authorList>
    </citation>
    <scope>GENOME REANNOTATION</scope>
    <source>
        <strain>ATCC 204508 / S288c</strain>
    </source>
</reference>
<reference key="3">
    <citation type="journal article" date="2000" name="FEBS Lett.">
        <title>Genomic exploration of the hemiascomycetous yeasts: 4. The genome of Saccharomyces cerevisiae revisited.</title>
        <authorList>
            <person name="Blandin G."/>
            <person name="Durrens P."/>
            <person name="Tekaia F."/>
            <person name="Aigle M."/>
            <person name="Bolotin-Fukuhara M."/>
            <person name="Bon E."/>
            <person name="Casaregola S."/>
            <person name="de Montigny J."/>
            <person name="Gaillardin C."/>
            <person name="Lepingle A."/>
            <person name="Llorente B."/>
            <person name="Malpertuy A."/>
            <person name="Neuveglise C."/>
            <person name="Ozier-Kalogeropoulos O."/>
            <person name="Perrin A."/>
            <person name="Potier S."/>
            <person name="Souciet J.-L."/>
            <person name="Talla E."/>
            <person name="Toffano-Nioche C."/>
            <person name="Wesolowski-Louvel M."/>
            <person name="Marck C."/>
            <person name="Dujon B."/>
        </authorList>
    </citation>
    <scope>GENOME REANNOTATION</scope>
</reference>
<reference key="4">
    <citation type="journal article" date="2006" name="J. Proteome Res.">
        <title>Toward the complete yeast mitochondrial proteome: multidimensional separation techniques for mitochondrial proteomics.</title>
        <authorList>
            <person name="Reinders J."/>
            <person name="Zahedi R.P."/>
            <person name="Pfanner N."/>
            <person name="Meisinger C."/>
            <person name="Sickmann A."/>
        </authorList>
    </citation>
    <scope>SUBCELLULAR LOCATION [LARGE SCALE ANALYSIS]</scope>
    <scope>IDENTIFICATION BY MASS SPECTROMETRY</scope>
</reference>
<reference key="5">
    <citation type="journal article" date="2006" name="Mol. Biol. Cell">
        <title>Proteomic analysis of the yeast mitochondrial outer membrane reveals accumulation of a subclass of preproteins.</title>
        <authorList>
            <person name="Zahedi R.P."/>
            <person name="Sickmann A."/>
            <person name="Boehm A.M."/>
            <person name="Winkler C."/>
            <person name="Zufall N."/>
            <person name="Schoenfisch B."/>
            <person name="Guiard B."/>
            <person name="Pfanner N."/>
            <person name="Meisinger C."/>
        </authorList>
    </citation>
    <scope>SUBCELLULAR LOCATION</scope>
    <scope>IDENTIFICATION BY MASS SPECTROMETRY</scope>
</reference>
<comment type="subcellular location">
    <subcellularLocation>
        <location evidence="2">Mitochondrion outer membrane</location>
        <topology evidence="2">Single-pass membrane protein</topology>
    </subcellularLocation>
</comment>
<name>YD381_YEAST</name>
<evidence type="ECO:0000255" key="1"/>
<evidence type="ECO:0000269" key="2">
    <source>
    </source>
</evidence>
<proteinExistence type="evidence at protein level"/>
<feature type="chain" id="PRO_0000253850" description="Uncharacterized mitochondrial outer membrane protein YDR381C-A">
    <location>
        <begin position="1"/>
        <end position="114"/>
    </location>
</feature>
<feature type="transmembrane region" description="Helical" evidence="1">
    <location>
        <begin position="13"/>
        <end position="30"/>
    </location>
</feature>
<accession>Q3E6R5</accession>
<accession>D6VT15</accession>